<reference key="1">
    <citation type="journal article" date="2008" name="PLoS ONE">
        <title>Comparative analysis of Acinetobacters: three genomes for three lifestyles.</title>
        <authorList>
            <person name="Vallenet D."/>
            <person name="Nordmann P."/>
            <person name="Barbe V."/>
            <person name="Poirel L."/>
            <person name="Mangenot S."/>
            <person name="Bataille E."/>
            <person name="Dossat C."/>
            <person name="Gas S."/>
            <person name="Kreimeyer A."/>
            <person name="Lenoble P."/>
            <person name="Oztas S."/>
            <person name="Poulain J."/>
            <person name="Segurens B."/>
            <person name="Robert C."/>
            <person name="Abergel C."/>
            <person name="Claverie J.-M."/>
            <person name="Raoult D."/>
            <person name="Medigue C."/>
            <person name="Weissenbach J."/>
            <person name="Cruveiller S."/>
        </authorList>
    </citation>
    <scope>NUCLEOTIDE SEQUENCE [LARGE SCALE GENOMIC DNA]</scope>
    <source>
        <strain>SDF</strain>
    </source>
</reference>
<comment type="function">
    <text evidence="1">Functions in the N-end rule pathway of protein degradation where it conjugates Leu from its aminoacyl-tRNA to the N-termini of proteins containing an N-terminal aspartate or glutamate.</text>
</comment>
<comment type="catalytic activity">
    <reaction evidence="1">
        <text>N-terminal L-glutamyl-[protein] + L-leucyl-tRNA(Leu) = N-terminal L-leucyl-L-glutamyl-[protein] + tRNA(Leu) + H(+)</text>
        <dbReference type="Rhea" id="RHEA:50412"/>
        <dbReference type="Rhea" id="RHEA-COMP:9613"/>
        <dbReference type="Rhea" id="RHEA-COMP:9622"/>
        <dbReference type="Rhea" id="RHEA-COMP:12664"/>
        <dbReference type="Rhea" id="RHEA-COMP:12668"/>
        <dbReference type="ChEBI" id="CHEBI:15378"/>
        <dbReference type="ChEBI" id="CHEBI:64721"/>
        <dbReference type="ChEBI" id="CHEBI:78442"/>
        <dbReference type="ChEBI" id="CHEBI:78494"/>
        <dbReference type="ChEBI" id="CHEBI:133041"/>
        <dbReference type="EC" id="2.3.2.29"/>
    </reaction>
</comment>
<comment type="catalytic activity">
    <reaction evidence="1">
        <text>N-terminal L-aspartyl-[protein] + L-leucyl-tRNA(Leu) = N-terminal L-leucyl-L-aspartyl-[protein] + tRNA(Leu) + H(+)</text>
        <dbReference type="Rhea" id="RHEA:50420"/>
        <dbReference type="Rhea" id="RHEA-COMP:9613"/>
        <dbReference type="Rhea" id="RHEA-COMP:9622"/>
        <dbReference type="Rhea" id="RHEA-COMP:12669"/>
        <dbReference type="Rhea" id="RHEA-COMP:12674"/>
        <dbReference type="ChEBI" id="CHEBI:15378"/>
        <dbReference type="ChEBI" id="CHEBI:64720"/>
        <dbReference type="ChEBI" id="CHEBI:78442"/>
        <dbReference type="ChEBI" id="CHEBI:78494"/>
        <dbReference type="ChEBI" id="CHEBI:133042"/>
        <dbReference type="EC" id="2.3.2.29"/>
    </reaction>
</comment>
<comment type="subcellular location">
    <subcellularLocation>
        <location evidence="1">Cytoplasm</location>
    </subcellularLocation>
</comment>
<comment type="similarity">
    <text evidence="1">Belongs to the R-transferase family. Bpt subfamily.</text>
</comment>
<accession>B0VTF8</accession>
<dbReference type="EC" id="2.3.2.29" evidence="1"/>
<dbReference type="EMBL" id="CU468230">
    <property type="protein sequence ID" value="CAP01873.1"/>
    <property type="molecule type" value="Genomic_DNA"/>
</dbReference>
<dbReference type="SMR" id="B0VTF8"/>
<dbReference type="KEGG" id="abm:ABSDF2563"/>
<dbReference type="HOGENOM" id="CLU_077607_0_0_6"/>
<dbReference type="Proteomes" id="UP000001741">
    <property type="component" value="Chromosome"/>
</dbReference>
<dbReference type="GO" id="GO:0005737">
    <property type="term" value="C:cytoplasm"/>
    <property type="evidence" value="ECO:0007669"/>
    <property type="project" value="UniProtKB-SubCell"/>
</dbReference>
<dbReference type="GO" id="GO:0004057">
    <property type="term" value="F:arginyl-tRNA--protein transferase activity"/>
    <property type="evidence" value="ECO:0007669"/>
    <property type="project" value="InterPro"/>
</dbReference>
<dbReference type="GO" id="GO:0008914">
    <property type="term" value="F:leucyl-tRNA--protein transferase activity"/>
    <property type="evidence" value="ECO:0007669"/>
    <property type="project" value="UniProtKB-UniRule"/>
</dbReference>
<dbReference type="GO" id="GO:0071596">
    <property type="term" value="P:ubiquitin-dependent protein catabolic process via the N-end rule pathway"/>
    <property type="evidence" value="ECO:0007669"/>
    <property type="project" value="InterPro"/>
</dbReference>
<dbReference type="HAMAP" id="MF_00689">
    <property type="entry name" value="Bpt"/>
    <property type="match status" value="1"/>
</dbReference>
<dbReference type="InterPro" id="IPR016181">
    <property type="entry name" value="Acyl_CoA_acyltransferase"/>
</dbReference>
<dbReference type="InterPro" id="IPR017138">
    <property type="entry name" value="Asp_Glu_LeuTrfase"/>
</dbReference>
<dbReference type="InterPro" id="IPR030700">
    <property type="entry name" value="N-end_Aminoacyl_Trfase"/>
</dbReference>
<dbReference type="InterPro" id="IPR007472">
    <property type="entry name" value="N-end_Aminoacyl_Trfase_C"/>
</dbReference>
<dbReference type="InterPro" id="IPR007471">
    <property type="entry name" value="N-end_Aminoacyl_Trfase_N"/>
</dbReference>
<dbReference type="NCBIfam" id="NF002341">
    <property type="entry name" value="PRK01305.1-1"/>
    <property type="match status" value="1"/>
</dbReference>
<dbReference type="NCBIfam" id="NF002342">
    <property type="entry name" value="PRK01305.1-3"/>
    <property type="match status" value="1"/>
</dbReference>
<dbReference type="NCBIfam" id="NF002346">
    <property type="entry name" value="PRK01305.2-3"/>
    <property type="match status" value="1"/>
</dbReference>
<dbReference type="PANTHER" id="PTHR21367">
    <property type="entry name" value="ARGININE-TRNA-PROTEIN TRANSFERASE 1"/>
    <property type="match status" value="1"/>
</dbReference>
<dbReference type="PANTHER" id="PTHR21367:SF1">
    <property type="entry name" value="ARGINYL-TRNA--PROTEIN TRANSFERASE 1"/>
    <property type="match status" value="1"/>
</dbReference>
<dbReference type="Pfam" id="PF04377">
    <property type="entry name" value="ATE_C"/>
    <property type="match status" value="1"/>
</dbReference>
<dbReference type="Pfam" id="PF04376">
    <property type="entry name" value="ATE_N"/>
    <property type="match status" value="1"/>
</dbReference>
<dbReference type="PIRSF" id="PIRSF037208">
    <property type="entry name" value="ATE_pro_prd"/>
    <property type="match status" value="1"/>
</dbReference>
<dbReference type="SUPFAM" id="SSF55729">
    <property type="entry name" value="Acyl-CoA N-acyltransferases (Nat)"/>
    <property type="match status" value="1"/>
</dbReference>
<feature type="chain" id="PRO_1000131965" description="Aspartate/glutamate leucyltransferase">
    <location>
        <begin position="1"/>
        <end position="271"/>
    </location>
</feature>
<protein>
    <recommendedName>
        <fullName evidence="1">Aspartate/glutamate leucyltransferase</fullName>
        <ecNumber evidence="1">2.3.2.29</ecNumber>
    </recommendedName>
</protein>
<keyword id="KW-0012">Acyltransferase</keyword>
<keyword id="KW-0963">Cytoplasm</keyword>
<keyword id="KW-0808">Transferase</keyword>
<organism>
    <name type="scientific">Acinetobacter baumannii (strain SDF)</name>
    <dbReference type="NCBI Taxonomy" id="509170"/>
    <lineage>
        <taxon>Bacteria</taxon>
        <taxon>Pseudomonadati</taxon>
        <taxon>Pseudomonadota</taxon>
        <taxon>Gammaproteobacteria</taxon>
        <taxon>Moraxellales</taxon>
        <taxon>Moraxellaceae</taxon>
        <taxon>Acinetobacter</taxon>
        <taxon>Acinetobacter calcoaceticus/baumannii complex</taxon>
    </lineage>
</organism>
<name>BPT_ACIBS</name>
<proteinExistence type="inferred from homology"/>
<evidence type="ECO:0000255" key="1">
    <source>
        <dbReference type="HAMAP-Rule" id="MF_00689"/>
    </source>
</evidence>
<sequence>MKSYHPKSLLNDLQYYITPPHDCSYLENKSARMVFLDPIHRIDVVTLSELSRLGFRRSGDFVYRPECHLCRQCLSCRVPVADFQMNSMQKKAWKRNQDLTMTVLPTRQASQIHYDLYERYINERHADGDMFPPSLDQFEKFLVHSCTDSFFLELWKDNRLISVSTCDLMDDGLSAVYTFFDPDEHRRSLGVYSILNQIEYVKTLGLEYVYLGYWVPHSAKMNYKSQYTPLELLLDGQWRRLNRSLSPEEINQLGNSLMTTLPSEWNNLIIK</sequence>
<gene>
    <name evidence="1" type="primary">bpt</name>
    <name type="ordered locus">ABSDF2563</name>
</gene>